<accession>Q9LIQ9</accession>
<keyword id="KW-0175">Coiled coil</keyword>
<keyword id="KW-0963">Cytoplasm</keyword>
<keyword id="KW-0217">Developmental protein</keyword>
<keyword id="KW-0341">Growth regulation</keyword>
<keyword id="KW-0539">Nucleus</keyword>
<keyword id="KW-1185">Reference proteome</keyword>
<keyword id="KW-0346">Stress response</keyword>
<evidence type="ECO:0000255" key="1"/>
<evidence type="ECO:0000256" key="2">
    <source>
        <dbReference type="SAM" id="MobiDB-lite"/>
    </source>
</evidence>
<evidence type="ECO:0000269" key="3">
    <source>
    </source>
</evidence>
<evidence type="ECO:0000269" key="4">
    <source>
    </source>
</evidence>
<evidence type="ECO:0000303" key="5">
    <source>
    </source>
</evidence>
<evidence type="ECO:0000303" key="6">
    <source>
    </source>
</evidence>
<evidence type="ECO:0000312" key="7">
    <source>
        <dbReference type="Araport" id="AT3G23980"/>
    </source>
</evidence>
<evidence type="ECO:0000312" key="8">
    <source>
        <dbReference type="EMBL" id="BAB03016.1"/>
    </source>
</evidence>
<proteinExistence type="evidence at protein level"/>
<organism>
    <name type="scientific">Arabidopsis thaliana</name>
    <name type="common">Mouse-ear cress</name>
    <dbReference type="NCBI Taxonomy" id="3702"/>
    <lineage>
        <taxon>Eukaryota</taxon>
        <taxon>Viridiplantae</taxon>
        <taxon>Streptophyta</taxon>
        <taxon>Embryophyta</taxon>
        <taxon>Tracheophyta</taxon>
        <taxon>Spermatophyta</taxon>
        <taxon>Magnoliopsida</taxon>
        <taxon>eudicotyledons</taxon>
        <taxon>Gunneridae</taxon>
        <taxon>Pentapetalae</taxon>
        <taxon>rosids</taxon>
        <taxon>malvids</taxon>
        <taxon>Brassicales</taxon>
        <taxon>Brassicaceae</taxon>
        <taxon>Camelineae</taxon>
        <taxon>Arabidopsis</taxon>
    </lineage>
</organism>
<comment type="function">
    <text evidence="3 4">Is required for normal leaf, flower and seed development and controls cotyledon and leaf patterning by inhibiting premature differentiation. Regulates the expression of a subset of PcG target genes. Is required for the repression of the floral specific genes PI, SEP2, and SEP3, but also for the activation of FLC (PubMed:20647345). Involved in response to cold. Involved in the regulation of COR15A, COR15B, BAM3 and AMY3 transcripts, and ascorbate levels in response to prolonged chilling temperatures (PubMed:20674078).</text>
</comment>
<comment type="subunit">
    <text evidence="3">Interacts with CLF.</text>
</comment>
<comment type="subcellular location">
    <subcellularLocation>
        <location evidence="3 4">Nucleus</location>
    </subcellularLocation>
    <subcellularLocation>
        <location evidence="3">Cytoplasm</location>
    </subcellularLocation>
    <text evidence="3">May shuttle between the nucleus and the cytoplasm.</text>
</comment>
<comment type="tissue specificity">
    <text evidence="3">Expressed in root tips, emerging lateral roots, shoot apical meristem (SAM), vasculature of cotyledons, leaves, sepals and carpels.</text>
</comment>
<comment type="developmental stage">
    <text evidence="3">During embryo development, expressed in the basal part and the vasculature of heart stage and torpedo stage embryos.</text>
</comment>
<comment type="disruption phenotype">
    <text evidence="3">Pleiotropic phenotype with defects in cotyledon, leaf, flower and seed development, slow growth, severe epidermal defects, including loss of cell adhesion, outgrowth of cells and increased cotyledon cell size.</text>
</comment>
<sequence length="714" mass="78384">MASATSSRRQEDVEAGRRKLEQFRKRKAAEKAKKASQNTQPVDNSQQSVIDSDGAGASISNGPLKQSAESTSNETHTKDVYNLSFSNTAMDDGSKERSRQDDGQESVGKVDFSNSLELIGSSKDLTVNTRPEVVPYSNIDKQSSESFDRASTLRETASLFSGTSMQMDGFIHGSGLTSSRKDSLQPTTRMAGSFDEVAKNQQGSGELGGSIVQKPTLSSSYLFNSPDTSSRPSEPSDFSVNITSSSPLNSAKSEATVKRSRPSFLDSLNISRAPETQYQHPEIQADLVTSSGSQLSGSDGFGPSYISGRRDSNGPSSLTSGASDYPNPFEKFRSSLYPAANGVMPGFTDFSMPKQNDDFTALEQHIEDLTQEKFSLQRDLDASRALAESLASENSSMTDTYNQQRGLVNQLKDDMERLYQQIQAQMGELESVRVEYANAQLECNAADERSQILASEVISLEDKALRLRSNELKLERELEKAQTEMLSYKKKLQSLEKDRQDLQSTIKALQEEKKVLQTMVQKASSGGKSTDLSKNSTSRKNVSTSTEGLAISDTTPESSNQETDSTTLLESDSSNTAIIPETRQLTLEGFSLSVPADQMRVIHNINTLIAELAIEKEELVQALSSELSRSAHVQELNKELSRKLEAQTQRLELVTAQKMAIDNVSPEKQQPDTHVVQERTPIADEGDEVVERVLGWIMKMFPGGPSKRRTSKLL</sequence>
<gene>
    <name evidence="5" type="primary">BLI</name>
    <name evidence="6" type="synonym">KOS1</name>
    <name evidence="7" type="ordered locus">At3g23980</name>
    <name evidence="8" type="ORF">F14O13.17</name>
</gene>
<reference key="1">
    <citation type="journal article" date="2000" name="DNA Res.">
        <title>Structural analysis of Arabidopsis thaliana chromosome 3. II. Sequence features of the 4,251,695 bp regions covered by 90 P1, TAC and BAC clones.</title>
        <authorList>
            <person name="Kaneko T."/>
            <person name="Katoh T."/>
            <person name="Sato S."/>
            <person name="Nakamura Y."/>
            <person name="Asamizu E."/>
            <person name="Tabata S."/>
        </authorList>
    </citation>
    <scope>NUCLEOTIDE SEQUENCE [LARGE SCALE GENOMIC DNA]</scope>
    <source>
        <strain>cv. Columbia</strain>
    </source>
</reference>
<reference key="2">
    <citation type="journal article" date="2017" name="Plant J.">
        <title>Araport11: a complete reannotation of the Arabidopsis thaliana reference genome.</title>
        <authorList>
            <person name="Cheng C.Y."/>
            <person name="Krishnakumar V."/>
            <person name="Chan A.P."/>
            <person name="Thibaud-Nissen F."/>
            <person name="Schobel S."/>
            <person name="Town C.D."/>
        </authorList>
    </citation>
    <scope>GENOME REANNOTATION</scope>
    <source>
        <strain>cv. Columbia</strain>
    </source>
</reference>
<reference key="3">
    <citation type="journal article" date="2010" name="Plant Cell">
        <title>The CURLY LEAF interacting protein BLISTER controls expression of polycomb-group target genes and cellular differentiation of Arabidopsis thaliana.</title>
        <authorList>
            <person name="Schatlowski N."/>
            <person name="Stahl Y."/>
            <person name="Hohenstatt M.L."/>
            <person name="Goodrich J."/>
            <person name="Schubert D."/>
        </authorList>
    </citation>
    <scope>FUNCTION</scope>
    <scope>INTERACTION WITH CLF</scope>
    <scope>SUBCELLULAR LOCATION</scope>
    <scope>TISSUE SPECIFICITY</scope>
    <scope>DEVELOPMENTAL STAGE</scope>
    <scope>DISRUPTION PHENOTYPE</scope>
</reference>
<reference key="4">
    <citation type="journal article" date="2011" name="J. Plant Physiol.">
        <title>A nuclear-localized protein, KOLD SENSITIV-1, affects the expression of cold-responsive genes during prolonged chilling in Arabidopsis.</title>
        <authorList>
            <person name="Purdy S.J."/>
            <person name="Bussell J.D."/>
            <person name="Nelson D.C."/>
            <person name="Villadsen D."/>
            <person name="Smith S.M."/>
        </authorList>
    </citation>
    <scope>FUNCTION</scope>
    <scope>SUBCELLULAR LOCATION</scope>
</reference>
<feature type="chain" id="PRO_0000440869" description="Protein BLISTER">
    <location>
        <begin position="1"/>
        <end position="714"/>
    </location>
</feature>
<feature type="region of interest" description="Disordered" evidence="2">
    <location>
        <begin position="1"/>
        <end position="113"/>
    </location>
</feature>
<feature type="region of interest" description="Disordered" evidence="2">
    <location>
        <begin position="219"/>
        <end position="261"/>
    </location>
</feature>
<feature type="region of interest" description="Disordered" evidence="2">
    <location>
        <begin position="288"/>
        <end position="325"/>
    </location>
</feature>
<feature type="region of interest" description="Disordered" evidence="2">
    <location>
        <begin position="519"/>
        <end position="576"/>
    </location>
</feature>
<feature type="coiled-coil region" evidence="1">
    <location>
        <begin position="356"/>
        <end position="525"/>
    </location>
</feature>
<feature type="compositionally biased region" description="Basic and acidic residues" evidence="2">
    <location>
        <begin position="8"/>
        <end position="33"/>
    </location>
</feature>
<feature type="compositionally biased region" description="Polar residues" evidence="2">
    <location>
        <begin position="36"/>
        <end position="50"/>
    </location>
</feature>
<feature type="compositionally biased region" description="Polar residues" evidence="2">
    <location>
        <begin position="58"/>
        <end position="74"/>
    </location>
</feature>
<feature type="compositionally biased region" description="Basic and acidic residues" evidence="2">
    <location>
        <begin position="92"/>
        <end position="102"/>
    </location>
</feature>
<feature type="compositionally biased region" description="Polar residues" evidence="2">
    <location>
        <begin position="219"/>
        <end position="253"/>
    </location>
</feature>
<feature type="compositionally biased region" description="Polar residues" evidence="2">
    <location>
        <begin position="288"/>
        <end position="297"/>
    </location>
</feature>
<feature type="compositionally biased region" description="Polar residues" evidence="2">
    <location>
        <begin position="313"/>
        <end position="322"/>
    </location>
</feature>
<feature type="compositionally biased region" description="Polar residues" evidence="2">
    <location>
        <begin position="519"/>
        <end position="561"/>
    </location>
</feature>
<feature type="compositionally biased region" description="Low complexity" evidence="2">
    <location>
        <begin position="562"/>
        <end position="576"/>
    </location>
</feature>
<protein>
    <recommendedName>
        <fullName evidence="5">Protein BLISTER</fullName>
    </recommendedName>
    <alternativeName>
        <fullName evidence="6">Protein KOLD SENSITIV-1</fullName>
    </alternativeName>
</protein>
<name>BLI_ARATH</name>
<dbReference type="EMBL" id="AP001297">
    <property type="protein sequence ID" value="BAB03016.1"/>
    <property type="molecule type" value="Genomic_DNA"/>
</dbReference>
<dbReference type="EMBL" id="CP002686">
    <property type="protein sequence ID" value="AEE76841.1"/>
    <property type="molecule type" value="Genomic_DNA"/>
</dbReference>
<dbReference type="RefSeq" id="NP_189040.3">
    <property type="nucleotide sequence ID" value="NM_113303.4"/>
</dbReference>
<dbReference type="SMR" id="Q9LIQ9"/>
<dbReference type="FunCoup" id="Q9LIQ9">
    <property type="interactions" value="2295"/>
</dbReference>
<dbReference type="STRING" id="3702.Q9LIQ9"/>
<dbReference type="iPTMnet" id="Q9LIQ9"/>
<dbReference type="PaxDb" id="3702-AT3G23980.1"/>
<dbReference type="ProteomicsDB" id="240547"/>
<dbReference type="EnsemblPlants" id="AT3G23980.1">
    <property type="protein sequence ID" value="AT3G23980.1"/>
    <property type="gene ID" value="AT3G23980"/>
</dbReference>
<dbReference type="GeneID" id="821982"/>
<dbReference type="Gramene" id="AT3G23980.1">
    <property type="protein sequence ID" value="AT3G23980.1"/>
    <property type="gene ID" value="AT3G23980"/>
</dbReference>
<dbReference type="KEGG" id="ath:AT3G23980"/>
<dbReference type="Araport" id="AT3G23980"/>
<dbReference type="TAIR" id="AT3G23980">
    <property type="gene designation" value="BLI"/>
</dbReference>
<dbReference type="eggNOG" id="ENOG502RCM2">
    <property type="taxonomic scope" value="Eukaryota"/>
</dbReference>
<dbReference type="HOGENOM" id="CLU_019488_0_0_1"/>
<dbReference type="InParanoid" id="Q9LIQ9"/>
<dbReference type="OMA" id="MPKQNDD"/>
<dbReference type="OrthoDB" id="2019993at2759"/>
<dbReference type="PhylomeDB" id="Q9LIQ9"/>
<dbReference type="PRO" id="PR:Q9LIQ9"/>
<dbReference type="Proteomes" id="UP000006548">
    <property type="component" value="Chromosome 3"/>
</dbReference>
<dbReference type="ExpressionAtlas" id="Q9LIQ9">
    <property type="expression patterns" value="baseline and differential"/>
</dbReference>
<dbReference type="GO" id="GO:0005737">
    <property type="term" value="C:cytoplasm"/>
    <property type="evidence" value="ECO:0007669"/>
    <property type="project" value="UniProtKB-SubCell"/>
</dbReference>
<dbReference type="GO" id="GO:0005634">
    <property type="term" value="C:nucleus"/>
    <property type="evidence" value="ECO:0000314"/>
    <property type="project" value="TAIR"/>
</dbReference>
<dbReference type="GO" id="GO:0048826">
    <property type="term" value="P:cotyledon morphogenesis"/>
    <property type="evidence" value="ECO:0000315"/>
    <property type="project" value="TAIR"/>
</dbReference>
<dbReference type="GO" id="GO:0009908">
    <property type="term" value="P:flower development"/>
    <property type="evidence" value="ECO:0000315"/>
    <property type="project" value="TAIR"/>
</dbReference>
<dbReference type="GO" id="GO:0009965">
    <property type="term" value="P:leaf morphogenesis"/>
    <property type="evidence" value="ECO:0000316"/>
    <property type="project" value="TAIR"/>
</dbReference>
<dbReference type="GO" id="GO:0051781">
    <property type="term" value="P:positive regulation of cell division"/>
    <property type="evidence" value="ECO:0000315"/>
    <property type="project" value="TAIR"/>
</dbReference>
<dbReference type="GO" id="GO:0006355">
    <property type="term" value="P:regulation of DNA-templated transcription"/>
    <property type="evidence" value="ECO:0000315"/>
    <property type="project" value="TAIR"/>
</dbReference>
<dbReference type="GO" id="GO:0040008">
    <property type="term" value="P:regulation of growth"/>
    <property type="evidence" value="ECO:0007669"/>
    <property type="project" value="InterPro"/>
</dbReference>
<dbReference type="GO" id="GO:0048316">
    <property type="term" value="P:seed development"/>
    <property type="evidence" value="ECO:0000315"/>
    <property type="project" value="TAIR"/>
</dbReference>
<dbReference type="GO" id="GO:0010091">
    <property type="term" value="P:trichome branching"/>
    <property type="evidence" value="ECO:0000315"/>
    <property type="project" value="TAIR"/>
</dbReference>
<dbReference type="Gene3D" id="1.10.287.1490">
    <property type="match status" value="1"/>
</dbReference>
<dbReference type="InterPro" id="IPR044194">
    <property type="entry name" value="BLISTER"/>
</dbReference>
<dbReference type="PANTHER" id="PTHR47490">
    <property type="entry name" value="PROTEIN BLISTER"/>
    <property type="match status" value="1"/>
</dbReference>
<dbReference type="PANTHER" id="PTHR47490:SF2">
    <property type="entry name" value="PROTEIN BLISTER"/>
    <property type="match status" value="1"/>
</dbReference>